<reference key="1">
    <citation type="journal article" date="2007" name="PLoS ONE">
        <title>Molecular correlates of host specialization in Staphylococcus aureus.</title>
        <authorList>
            <person name="Herron-Olson L."/>
            <person name="Fitzgerald J.R."/>
            <person name="Musser J.M."/>
            <person name="Kapur V."/>
        </authorList>
    </citation>
    <scope>NUCLEOTIDE SEQUENCE [LARGE SCALE GENOMIC DNA]</scope>
    <source>
        <strain>bovine RF122 / ET3-1</strain>
    </source>
</reference>
<sequence>MNFPWDQLLVKGNWMITMAQIGAPFLVIGLIAVITYFKLWKYLYKEWFTSVDHKKIGIMYLICAVLMFVRGGIDALLIRAQLTVPDNKFLESNHYNEIFSTHGVIMIIFMAMPFIFGLWNIVVPLQIGARDVAFPVLNNVSFWLFFAGMILFNLSFIIGGSPAAGWTNYAPLAGEFSPGPGVNYYLIAIQISGLGTLATGINFFVTILRCKTPTMKFMQMPMFTVTTFITTLIVILAFPPLTVALALMTTDRIFDTAFFTVAHGGMPMLWANFFWVWGHPEVYIVILPAFGIYSEIIPTFARKRLFGHQSMVWATAGIAFLSFLVWVHHFFTMGNGALINSFFSISTMLIGIPTGVKLFNWLLTLYKGRITFESPMLFSLAFIPNFLLGGVTGVMLAMASADYQYHNTYFLVAHFHYTLVTGVVFACLAGLIFWYPKMMGYKLNETLNKWCFWFFMIGFNVCFLPQFILGLDGMPRRLYTYMPSDGWFLLNLISTIGALLMAIGFLFLVVSIVYSHFKSPREATGDNWDGLGRTLEWTTASAIPPKYNFAITPDWNDYDTFVDMKEHGRHYLDNHNYKDIHMPNNTPVGFWIGIFMTIGGFFLIFETVIPALICLFGIFGTMIYRSFQIDHGYHIPAAEVAETEARLREARIKEREAVSHES</sequence>
<comment type="function">
    <text evidence="1">Catalyzes quinol oxidation with the concomitant reduction of oxygen to water.</text>
</comment>
<comment type="catalytic activity">
    <reaction>
        <text>2 a quinol + O2 = 2 a quinone + 2 H2O</text>
        <dbReference type="Rhea" id="RHEA:55376"/>
        <dbReference type="ChEBI" id="CHEBI:15377"/>
        <dbReference type="ChEBI" id="CHEBI:15379"/>
        <dbReference type="ChEBI" id="CHEBI:24646"/>
        <dbReference type="ChEBI" id="CHEBI:132124"/>
    </reaction>
</comment>
<comment type="cofactor">
    <cofactor evidence="1">
        <name>Cu cation</name>
        <dbReference type="ChEBI" id="CHEBI:23378"/>
    </cofactor>
    <text evidence="1">Binds a copper B center.</text>
</comment>
<comment type="cofactor">
    <cofactor evidence="1">
        <name>ferriheme a</name>
        <dbReference type="ChEBI" id="CHEBI:60532"/>
    </cofactor>
</comment>
<comment type="cofactor">
    <text evidence="1">Heme A3.</text>
</comment>
<comment type="pathway">
    <text>Energy metabolism; oxidative phosphorylation.</text>
</comment>
<comment type="subcellular location">
    <subcellularLocation>
        <location evidence="1">Cell membrane</location>
        <topology evidence="1">Multi-pass membrane protein</topology>
    </subcellularLocation>
</comment>
<comment type="similarity">
    <text evidence="3">Belongs to the heme-copper respiratory oxidase family.</text>
</comment>
<dbReference type="EC" id="1.10.3.-"/>
<dbReference type="EMBL" id="AJ938182">
    <property type="protein sequence ID" value="CAI80614.1"/>
    <property type="molecule type" value="Genomic_DNA"/>
</dbReference>
<dbReference type="RefSeq" id="WP_001010762.1">
    <property type="nucleotide sequence ID" value="NC_007622.1"/>
</dbReference>
<dbReference type="SMR" id="Q2YX15"/>
<dbReference type="KEGG" id="sab:SAB0926c"/>
<dbReference type="HOGENOM" id="CLU_011899_7_1_9"/>
<dbReference type="UniPathway" id="UPA00705"/>
<dbReference type="GO" id="GO:0005886">
    <property type="term" value="C:plasma membrane"/>
    <property type="evidence" value="ECO:0007669"/>
    <property type="project" value="UniProtKB-SubCell"/>
</dbReference>
<dbReference type="GO" id="GO:0005507">
    <property type="term" value="F:copper ion binding"/>
    <property type="evidence" value="ECO:0007669"/>
    <property type="project" value="InterPro"/>
</dbReference>
<dbReference type="GO" id="GO:0004129">
    <property type="term" value="F:cytochrome-c oxidase activity"/>
    <property type="evidence" value="ECO:0007669"/>
    <property type="project" value="InterPro"/>
</dbReference>
<dbReference type="GO" id="GO:0020037">
    <property type="term" value="F:heme binding"/>
    <property type="evidence" value="ECO:0007669"/>
    <property type="project" value="InterPro"/>
</dbReference>
<dbReference type="GO" id="GO:0016682">
    <property type="term" value="F:oxidoreductase activity, acting on diphenols and related substances as donors, oxygen as acceptor"/>
    <property type="evidence" value="ECO:0007669"/>
    <property type="project" value="InterPro"/>
</dbReference>
<dbReference type="GO" id="GO:0015990">
    <property type="term" value="P:electron transport coupled proton transport"/>
    <property type="evidence" value="ECO:0007669"/>
    <property type="project" value="TreeGrafter"/>
</dbReference>
<dbReference type="GO" id="GO:0006119">
    <property type="term" value="P:oxidative phosphorylation"/>
    <property type="evidence" value="ECO:0007669"/>
    <property type="project" value="UniProtKB-UniPathway"/>
</dbReference>
<dbReference type="GO" id="GO:0022904">
    <property type="term" value="P:respiratory electron transport chain"/>
    <property type="evidence" value="ECO:0007669"/>
    <property type="project" value="TreeGrafter"/>
</dbReference>
<dbReference type="CDD" id="cd01662">
    <property type="entry name" value="Ubiquinol_Oxidase_I"/>
    <property type="match status" value="1"/>
</dbReference>
<dbReference type="FunFam" id="1.20.210.10:FF:000002">
    <property type="entry name" value="Cytochrome o ubiquinol oxidase, subunit I"/>
    <property type="match status" value="1"/>
</dbReference>
<dbReference type="Gene3D" id="1.20.210.10">
    <property type="entry name" value="Cytochrome c oxidase-like, subunit I domain"/>
    <property type="match status" value="1"/>
</dbReference>
<dbReference type="InterPro" id="IPR023616">
    <property type="entry name" value="Cyt_c_oxase-like_su1_dom"/>
</dbReference>
<dbReference type="InterPro" id="IPR036927">
    <property type="entry name" value="Cyt_c_oxase-like_su1_sf"/>
</dbReference>
<dbReference type="InterPro" id="IPR000883">
    <property type="entry name" value="Cyt_C_Oxase_1"/>
</dbReference>
<dbReference type="InterPro" id="IPR023615">
    <property type="entry name" value="Cyt_c_Oxase_su1_BS"/>
</dbReference>
<dbReference type="InterPro" id="IPR014233">
    <property type="entry name" value="QoxB"/>
</dbReference>
<dbReference type="NCBIfam" id="TIGR02882">
    <property type="entry name" value="QoxB"/>
    <property type="match status" value="1"/>
</dbReference>
<dbReference type="PANTHER" id="PTHR10422:SF35">
    <property type="entry name" value="CYTOCHROME BO(3) UBIQUINOL OXIDASE SUBUNIT 1"/>
    <property type="match status" value="1"/>
</dbReference>
<dbReference type="PANTHER" id="PTHR10422">
    <property type="entry name" value="CYTOCHROME C OXIDASE SUBUNIT 1"/>
    <property type="match status" value="1"/>
</dbReference>
<dbReference type="Pfam" id="PF00115">
    <property type="entry name" value="COX1"/>
    <property type="match status" value="1"/>
</dbReference>
<dbReference type="PRINTS" id="PR01165">
    <property type="entry name" value="CYCOXIDASEI"/>
</dbReference>
<dbReference type="SUPFAM" id="SSF81442">
    <property type="entry name" value="Cytochrome c oxidase subunit I-like"/>
    <property type="match status" value="1"/>
</dbReference>
<dbReference type="PROSITE" id="PS50855">
    <property type="entry name" value="COX1"/>
    <property type="match status" value="1"/>
</dbReference>
<dbReference type="PROSITE" id="PS00077">
    <property type="entry name" value="COX1_CUB"/>
    <property type="match status" value="1"/>
</dbReference>
<organism>
    <name type="scientific">Staphylococcus aureus (strain bovine RF122 / ET3-1)</name>
    <dbReference type="NCBI Taxonomy" id="273036"/>
    <lineage>
        <taxon>Bacteria</taxon>
        <taxon>Bacillati</taxon>
        <taxon>Bacillota</taxon>
        <taxon>Bacilli</taxon>
        <taxon>Bacillales</taxon>
        <taxon>Staphylococcaceae</taxon>
        <taxon>Staphylococcus</taxon>
    </lineage>
</organism>
<gene>
    <name type="primary">qoxB</name>
    <name type="ordered locus">SAB0926c</name>
</gene>
<evidence type="ECO:0000250" key="1"/>
<evidence type="ECO:0000255" key="2"/>
<evidence type="ECO:0000305" key="3"/>
<feature type="chain" id="PRO_0000276741" description="Probable quinol oxidase subunit 1">
    <location>
        <begin position="1"/>
        <end position="662"/>
    </location>
</feature>
<feature type="transmembrane region" description="Helical" evidence="2">
    <location>
        <begin position="14"/>
        <end position="34"/>
    </location>
</feature>
<feature type="transmembrane region" description="Helical" evidence="2">
    <location>
        <begin position="58"/>
        <end position="78"/>
    </location>
</feature>
<feature type="transmembrane region" description="Helical" evidence="2">
    <location>
        <begin position="103"/>
        <end position="123"/>
    </location>
</feature>
<feature type="transmembrane region" description="Helical" evidence="2">
    <location>
        <begin position="140"/>
        <end position="160"/>
    </location>
</feature>
<feature type="transmembrane region" description="Helical" evidence="2">
    <location>
        <begin position="187"/>
        <end position="207"/>
    </location>
</feature>
<feature type="transmembrane region" description="Helical" evidence="2">
    <location>
        <begin position="228"/>
        <end position="248"/>
    </location>
</feature>
<feature type="transmembrane region" description="Helical" evidence="2">
    <location>
        <begin position="273"/>
        <end position="293"/>
    </location>
</feature>
<feature type="transmembrane region" description="Helical" evidence="2">
    <location>
        <begin position="311"/>
        <end position="331"/>
    </location>
</feature>
<feature type="transmembrane region" description="Helical" evidence="2">
    <location>
        <begin position="336"/>
        <end position="356"/>
    </location>
</feature>
<feature type="transmembrane region" description="Helical" evidence="2">
    <location>
        <begin position="376"/>
        <end position="396"/>
    </location>
</feature>
<feature type="transmembrane region" description="Helical" evidence="2">
    <location>
        <begin position="415"/>
        <end position="435"/>
    </location>
</feature>
<feature type="transmembrane region" description="Helical" evidence="2">
    <location>
        <begin position="451"/>
        <end position="471"/>
    </location>
</feature>
<feature type="transmembrane region" description="Helical" evidence="2">
    <location>
        <begin position="493"/>
        <end position="513"/>
    </location>
</feature>
<feature type="transmembrane region" description="Helical" evidence="2">
    <location>
        <begin position="587"/>
        <end position="604"/>
    </location>
</feature>
<feature type="transmembrane region" description="Helical" evidence="2">
    <location>
        <begin position="608"/>
        <end position="627"/>
    </location>
</feature>
<feature type="binding site" description="axial binding residue" evidence="1">
    <location>
        <position position="102"/>
    </location>
    <ligand>
        <name>Fe(II)-heme a</name>
        <dbReference type="ChEBI" id="CHEBI:61715"/>
    </ligand>
    <ligandPart>
        <name>Fe</name>
        <dbReference type="ChEBI" id="CHEBI:18248"/>
    </ligandPart>
</feature>
<feature type="binding site" evidence="1">
    <location>
        <position position="279"/>
    </location>
    <ligand>
        <name>Cu cation</name>
        <dbReference type="ChEBI" id="CHEBI:23378"/>
        <label>B</label>
    </ligand>
</feature>
<feature type="binding site" evidence="1">
    <location>
        <position position="283"/>
    </location>
    <ligand>
        <name>Cu cation</name>
        <dbReference type="ChEBI" id="CHEBI:23378"/>
        <label>B</label>
    </ligand>
</feature>
<feature type="binding site" evidence="1">
    <location>
        <position position="328"/>
    </location>
    <ligand>
        <name>Cu cation</name>
        <dbReference type="ChEBI" id="CHEBI:23378"/>
        <label>B</label>
    </ligand>
</feature>
<feature type="binding site" evidence="1">
    <location>
        <position position="329"/>
    </location>
    <ligand>
        <name>Cu cation</name>
        <dbReference type="ChEBI" id="CHEBI:23378"/>
        <label>B</label>
    </ligand>
</feature>
<feature type="binding site" description="axial binding residue" evidence="1">
    <location>
        <position position="414"/>
    </location>
    <ligand>
        <name>heme a3</name>
        <dbReference type="ChEBI" id="CHEBI:83282"/>
    </ligand>
    <ligandPart>
        <name>Fe</name>
        <dbReference type="ChEBI" id="CHEBI:18248"/>
    </ligandPart>
</feature>
<feature type="binding site" description="axial binding residue" evidence="1">
    <location>
        <position position="416"/>
    </location>
    <ligand>
        <name>Fe(II)-heme a</name>
        <dbReference type="ChEBI" id="CHEBI:61715"/>
    </ligand>
    <ligandPart>
        <name>Fe</name>
        <dbReference type="ChEBI" id="CHEBI:18248"/>
    </ligandPart>
</feature>
<feature type="cross-link" description="1'-histidyl-3'-tyrosine (His-Tyr)" evidence="1">
    <location>
        <begin position="279"/>
        <end position="283"/>
    </location>
</feature>
<proteinExistence type="inferred from homology"/>
<keyword id="KW-1003">Cell membrane</keyword>
<keyword id="KW-0186">Copper</keyword>
<keyword id="KW-0249">Electron transport</keyword>
<keyword id="KW-0349">Heme</keyword>
<keyword id="KW-0375">Hydrogen ion transport</keyword>
<keyword id="KW-0406">Ion transport</keyword>
<keyword id="KW-0408">Iron</keyword>
<keyword id="KW-0472">Membrane</keyword>
<keyword id="KW-0479">Metal-binding</keyword>
<keyword id="KW-0560">Oxidoreductase</keyword>
<keyword id="KW-0679">Respiratory chain</keyword>
<keyword id="KW-0812">Transmembrane</keyword>
<keyword id="KW-1133">Transmembrane helix</keyword>
<keyword id="KW-0813">Transport</keyword>
<name>QOX1_STAAB</name>
<protein>
    <recommendedName>
        <fullName>Probable quinol oxidase subunit 1</fullName>
        <ecNumber>1.10.3.-</ecNumber>
    </recommendedName>
    <alternativeName>
        <fullName>Quinol oxidase polypeptide I</fullName>
    </alternativeName>
</protein>
<accession>Q2YX15</accession>